<reference evidence="4" key="1">
    <citation type="journal article" date="2007" name="Nature">
        <title>Evolution of genes and genomes on the Drosophila phylogeny.</title>
        <authorList>
            <consortium name="Drosophila 12 genomes consortium"/>
        </authorList>
    </citation>
    <scope>NUCLEOTIDE SEQUENCE [LARGE SCALE GENOMIC DNA]</scope>
    <source>
        <strain evidence="4">Tucson 14024-0371.13</strain>
    </source>
</reference>
<accession>B3MDU3</accession>
<gene>
    <name evidence="1" type="primary">king-tubby</name>
    <name type="ORF">GF11934</name>
</gene>
<keyword id="KW-1003">Cell membrane</keyword>
<keyword id="KW-0966">Cell projection</keyword>
<keyword id="KW-0963">Cytoplasm</keyword>
<keyword id="KW-0472">Membrane</keyword>
<keyword id="KW-0539">Nucleus</keyword>
<keyword id="KW-0597">Phosphoprotein</keyword>
<keyword id="KW-1185">Reference proteome</keyword>
<organism>
    <name type="scientific">Drosophila ananassae</name>
    <name type="common">Fruit fly</name>
    <dbReference type="NCBI Taxonomy" id="7217"/>
    <lineage>
        <taxon>Eukaryota</taxon>
        <taxon>Metazoa</taxon>
        <taxon>Ecdysozoa</taxon>
        <taxon>Arthropoda</taxon>
        <taxon>Hexapoda</taxon>
        <taxon>Insecta</taxon>
        <taxon>Pterygota</taxon>
        <taxon>Neoptera</taxon>
        <taxon>Endopterygota</taxon>
        <taxon>Diptera</taxon>
        <taxon>Brachycera</taxon>
        <taxon>Muscomorpha</taxon>
        <taxon>Ephydroidea</taxon>
        <taxon>Drosophilidae</taxon>
        <taxon>Drosophila</taxon>
        <taxon>Sophophora</taxon>
    </lineage>
</organism>
<evidence type="ECO:0000250" key="1">
    <source>
        <dbReference type="UniProtKB" id="Q86PC9"/>
    </source>
</evidence>
<evidence type="ECO:0000255" key="2"/>
<evidence type="ECO:0000256" key="3">
    <source>
        <dbReference type="SAM" id="MobiDB-lite"/>
    </source>
</evidence>
<evidence type="ECO:0000312" key="4">
    <source>
        <dbReference type="EMBL" id="EDV36478.1"/>
    </source>
</evidence>
<dbReference type="EMBL" id="CH902619">
    <property type="protein sequence ID" value="EDV36478.1"/>
    <property type="molecule type" value="Genomic_DNA"/>
</dbReference>
<dbReference type="SMR" id="B3MDU3"/>
<dbReference type="FunCoup" id="B3MDU3">
    <property type="interactions" value="195"/>
</dbReference>
<dbReference type="STRING" id="7217.B3MDU3"/>
<dbReference type="GeneID" id="6494793"/>
<dbReference type="KEGG" id="dan:6494793"/>
<dbReference type="CTD" id="37400"/>
<dbReference type="eggNOG" id="KOG2502">
    <property type="taxonomic scope" value="Eukaryota"/>
</dbReference>
<dbReference type="HOGENOM" id="CLU_028236_1_1_1"/>
<dbReference type="InParanoid" id="B3MDU3"/>
<dbReference type="OMA" id="GYDGPMQ"/>
<dbReference type="OrthoDB" id="8775810at2759"/>
<dbReference type="PhylomeDB" id="B3MDU3"/>
<dbReference type="ChiTaRS" id="ktub">
    <property type="organism name" value="fly"/>
</dbReference>
<dbReference type="Proteomes" id="UP000007801">
    <property type="component" value="Unassembled WGS sequence"/>
</dbReference>
<dbReference type="GO" id="GO:0060170">
    <property type="term" value="C:ciliary membrane"/>
    <property type="evidence" value="ECO:0007669"/>
    <property type="project" value="UniProtKB-SubCell"/>
</dbReference>
<dbReference type="GO" id="GO:0005737">
    <property type="term" value="C:cytoplasm"/>
    <property type="evidence" value="ECO:0000250"/>
    <property type="project" value="UniProtKB"/>
</dbReference>
<dbReference type="GO" id="GO:0005634">
    <property type="term" value="C:nucleus"/>
    <property type="evidence" value="ECO:0000250"/>
    <property type="project" value="UniProtKB"/>
</dbReference>
<dbReference type="GO" id="GO:0016028">
    <property type="term" value="C:rhabdomere"/>
    <property type="evidence" value="ECO:0007669"/>
    <property type="project" value="UniProtKB-SubCell"/>
</dbReference>
<dbReference type="GO" id="GO:0061512">
    <property type="term" value="P:protein localization to cilium"/>
    <property type="evidence" value="ECO:0007669"/>
    <property type="project" value="TreeGrafter"/>
</dbReference>
<dbReference type="FunFam" id="3.20.90.10:FF:000001">
    <property type="entry name" value="Tubby-like protein"/>
    <property type="match status" value="1"/>
</dbReference>
<dbReference type="Gene3D" id="3.20.90.10">
    <property type="entry name" value="Tubby Protein, Chain A"/>
    <property type="match status" value="1"/>
</dbReference>
<dbReference type="InterPro" id="IPR025659">
    <property type="entry name" value="Tubby-like_C"/>
</dbReference>
<dbReference type="InterPro" id="IPR000007">
    <property type="entry name" value="Tubby_C"/>
</dbReference>
<dbReference type="InterPro" id="IPR018066">
    <property type="entry name" value="Tubby_C_CS"/>
</dbReference>
<dbReference type="PANTHER" id="PTHR16517:SF7">
    <property type="entry name" value="PROTEIN KING TUBBY"/>
    <property type="match status" value="1"/>
</dbReference>
<dbReference type="PANTHER" id="PTHR16517">
    <property type="entry name" value="TUBBY-RELATED"/>
    <property type="match status" value="1"/>
</dbReference>
<dbReference type="Pfam" id="PF01167">
    <property type="entry name" value="Tub"/>
    <property type="match status" value="1"/>
</dbReference>
<dbReference type="PRINTS" id="PR01573">
    <property type="entry name" value="SUPERTUBBY"/>
</dbReference>
<dbReference type="SUPFAM" id="SSF54518">
    <property type="entry name" value="Tubby C-terminal domain-like"/>
    <property type="match status" value="1"/>
</dbReference>
<dbReference type="PROSITE" id="PS01200">
    <property type="entry name" value="TUB_1"/>
    <property type="match status" value="1"/>
</dbReference>
<dbReference type="PROSITE" id="PS01201">
    <property type="entry name" value="TUB_2"/>
    <property type="match status" value="1"/>
</dbReference>
<comment type="subcellular location">
    <subcellularLocation>
        <location evidence="1">Cytoplasm</location>
    </subcellularLocation>
    <subcellularLocation>
        <location evidence="1">Nucleus</location>
    </subcellularLocation>
    <subcellularLocation>
        <location evidence="1">Cell projection</location>
        <location evidence="1">Cilium membrane</location>
        <topology evidence="1">Peripheral membrane protein</topology>
    </subcellularLocation>
    <subcellularLocation>
        <location evidence="1">Cell projection</location>
        <location evidence="1">Rhabdomere</location>
    </subcellularLocation>
</comment>
<comment type="similarity">
    <text evidence="2">Belongs to the TUB family.</text>
</comment>
<protein>
    <recommendedName>
        <fullName evidence="1">Protein king tubby</fullName>
    </recommendedName>
</protein>
<name>TULP_DROAN</name>
<feature type="chain" id="PRO_0000400835" description="Protein king tubby">
    <location>
        <begin position="1"/>
        <end position="449"/>
    </location>
</feature>
<feature type="region of interest" description="Disordered" evidence="3">
    <location>
        <begin position="123"/>
        <end position="197"/>
    </location>
</feature>
<feature type="compositionally biased region" description="Polar residues" evidence="3">
    <location>
        <begin position="124"/>
        <end position="145"/>
    </location>
</feature>
<feature type="compositionally biased region" description="Low complexity" evidence="3">
    <location>
        <begin position="154"/>
        <end position="166"/>
    </location>
</feature>
<feature type="compositionally biased region" description="Gly residues" evidence="3">
    <location>
        <begin position="183"/>
        <end position="192"/>
    </location>
</feature>
<feature type="modified residue" description="Phosphoserine" evidence="1">
    <location>
        <position position="142"/>
    </location>
</feature>
<sequence>MGRLERQLMEAYIRQKRASPGMVQASDLQINRPMSGMRSNSRELHAYDGPMQFISSPQNPDQILSNGSPGGIAPATINTSRNHSNNMRSLSTINQEADLIEEISSHELEDEESSPVTVIEQHSAVHSANSTQSQRPRPRQHSFSDTLDEDDYTNRNVAAAAPVRPAGVPSSPYKEATLDGSSNGTGNGTGGESEGDVIGNIDQFVMQPAPQGVLYKCRITRDRKGMDRGLFPIYYLHLERDYGKKIFLLGGRKRKKSKTSNYIVSCDPTDLSRNADGFCGKLRSNVFGTSFTVFDNGNKESTESPRLDLAVIIYDTNILGFKGPRNMTVILPGMTEDDQRVKISSADPKQQGILDLWKMKNMDNIVELHNKTPVWNDETQSYVLNFHGRVTQASVKNFQLVHDSDPEYIVMQFGRTSEDVFTMDYRYPLCAMQAFAIALSSFDGKIACE</sequence>
<proteinExistence type="inferred from homology"/>